<comment type="function">
    <text evidence="1">One of the primary rRNA binding proteins, it binds directly to 16S rRNA where it helps nucleate assembly of the platform of the 30S subunit by binding and bridging several RNA helices of the 16S rRNA.</text>
</comment>
<comment type="function">
    <text evidence="1">Forms an intersubunit bridge (bridge B4) with the 23S rRNA of the 50S subunit in the ribosome.</text>
</comment>
<comment type="subunit">
    <text evidence="1">Part of the 30S ribosomal subunit. Forms a bridge to the 50S subunit in the 70S ribosome, contacting the 23S rRNA.</text>
</comment>
<comment type="similarity">
    <text evidence="1">Belongs to the universal ribosomal protein uS15 family.</text>
</comment>
<sequence>MAISKEKKNEIIAQYARHEGDTGSVEVQVAVLTWEINHLNEHIKQHKKDHATYRGLMKKIGRRRNLLAYLRKNDVNRYRELINSLGLRR</sequence>
<reference key="1">
    <citation type="journal article" date="2001" name="J. Bacteriol.">
        <title>Genome of the bacterium Streptococcus pneumoniae strain R6.</title>
        <authorList>
            <person name="Hoskins J."/>
            <person name="Alborn W.E. Jr."/>
            <person name="Arnold J."/>
            <person name="Blaszczak L.C."/>
            <person name="Burgett S."/>
            <person name="DeHoff B.S."/>
            <person name="Estrem S.T."/>
            <person name="Fritz L."/>
            <person name="Fu D.-J."/>
            <person name="Fuller W."/>
            <person name="Geringer C."/>
            <person name="Gilmour R."/>
            <person name="Glass J.S."/>
            <person name="Khoja H."/>
            <person name="Kraft A.R."/>
            <person name="Lagace R.E."/>
            <person name="LeBlanc D.J."/>
            <person name="Lee L.N."/>
            <person name="Lefkowitz E.J."/>
            <person name="Lu J."/>
            <person name="Matsushima P."/>
            <person name="McAhren S.M."/>
            <person name="McHenney M."/>
            <person name="McLeaster K."/>
            <person name="Mundy C.W."/>
            <person name="Nicas T.I."/>
            <person name="Norris F.H."/>
            <person name="O'Gara M."/>
            <person name="Peery R.B."/>
            <person name="Robertson G.T."/>
            <person name="Rockey P."/>
            <person name="Sun P.-M."/>
            <person name="Winkler M.E."/>
            <person name="Yang Y."/>
            <person name="Young-Bellido M."/>
            <person name="Zhao G."/>
            <person name="Zook C.A."/>
            <person name="Baltz R.H."/>
            <person name="Jaskunas S.R."/>
            <person name="Rosteck P.R. Jr."/>
            <person name="Skatrud P.L."/>
            <person name="Glass J.I."/>
        </authorList>
    </citation>
    <scope>NUCLEOTIDE SEQUENCE [LARGE SCALE GENOMIC DNA]</scope>
    <source>
        <strain>ATCC BAA-255 / R6</strain>
    </source>
</reference>
<keyword id="KW-1185">Reference proteome</keyword>
<keyword id="KW-0687">Ribonucleoprotein</keyword>
<keyword id="KW-0689">Ribosomal protein</keyword>
<keyword id="KW-0694">RNA-binding</keyword>
<keyword id="KW-0699">rRNA-binding</keyword>
<accession>Q8CWQ0</accession>
<protein>
    <recommendedName>
        <fullName evidence="1">Small ribosomal subunit protein uS15</fullName>
    </recommendedName>
    <alternativeName>
        <fullName evidence="2">30S ribosomal protein S15</fullName>
    </alternativeName>
</protein>
<name>RS15_STRR6</name>
<proteinExistence type="inferred from homology"/>
<evidence type="ECO:0000255" key="1">
    <source>
        <dbReference type="HAMAP-Rule" id="MF_01343"/>
    </source>
</evidence>
<evidence type="ECO:0000305" key="2"/>
<feature type="chain" id="PRO_0000115554" description="Small ribosomal subunit protein uS15">
    <location>
        <begin position="1"/>
        <end position="89"/>
    </location>
</feature>
<organism>
    <name type="scientific">Streptococcus pneumoniae (strain ATCC BAA-255 / R6)</name>
    <dbReference type="NCBI Taxonomy" id="171101"/>
    <lineage>
        <taxon>Bacteria</taxon>
        <taxon>Bacillati</taxon>
        <taxon>Bacillota</taxon>
        <taxon>Bacilli</taxon>
        <taxon>Lactobacillales</taxon>
        <taxon>Streptococcaceae</taxon>
        <taxon>Streptococcus</taxon>
    </lineage>
</organism>
<gene>
    <name evidence="1" type="primary">rpsO</name>
    <name type="ordered locus">spr1467</name>
</gene>
<dbReference type="EMBL" id="AE007317">
    <property type="protein sequence ID" value="AAL00271.1"/>
    <property type="molecule type" value="Genomic_DNA"/>
</dbReference>
<dbReference type="PIR" id="A95189">
    <property type="entry name" value="A95189"/>
</dbReference>
<dbReference type="PIR" id="B98055">
    <property type="entry name" value="B98055"/>
</dbReference>
<dbReference type="RefSeq" id="NP_359060.1">
    <property type="nucleotide sequence ID" value="NC_003098.1"/>
</dbReference>
<dbReference type="RefSeq" id="WP_001018251.1">
    <property type="nucleotide sequence ID" value="NC_003098.1"/>
</dbReference>
<dbReference type="SMR" id="Q8CWQ0"/>
<dbReference type="STRING" id="171101.spr1467"/>
<dbReference type="GeneID" id="93847676"/>
<dbReference type="KEGG" id="spr:spr1467"/>
<dbReference type="PATRIC" id="fig|171101.6.peg.1586"/>
<dbReference type="eggNOG" id="COG0184">
    <property type="taxonomic scope" value="Bacteria"/>
</dbReference>
<dbReference type="HOGENOM" id="CLU_148518_0_0_9"/>
<dbReference type="PRO" id="PR:Q8CWQ0"/>
<dbReference type="Proteomes" id="UP000000586">
    <property type="component" value="Chromosome"/>
</dbReference>
<dbReference type="GO" id="GO:0022627">
    <property type="term" value="C:cytosolic small ribosomal subunit"/>
    <property type="evidence" value="ECO:0000318"/>
    <property type="project" value="GO_Central"/>
</dbReference>
<dbReference type="GO" id="GO:0019843">
    <property type="term" value="F:rRNA binding"/>
    <property type="evidence" value="ECO:0007669"/>
    <property type="project" value="UniProtKB-UniRule"/>
</dbReference>
<dbReference type="GO" id="GO:0003735">
    <property type="term" value="F:structural constituent of ribosome"/>
    <property type="evidence" value="ECO:0007669"/>
    <property type="project" value="InterPro"/>
</dbReference>
<dbReference type="GO" id="GO:0006412">
    <property type="term" value="P:translation"/>
    <property type="evidence" value="ECO:0007669"/>
    <property type="project" value="UniProtKB-UniRule"/>
</dbReference>
<dbReference type="CDD" id="cd00353">
    <property type="entry name" value="Ribosomal_S15p_S13e"/>
    <property type="match status" value="1"/>
</dbReference>
<dbReference type="FunFam" id="1.10.287.10:FF:000002">
    <property type="entry name" value="30S ribosomal protein S15"/>
    <property type="match status" value="1"/>
</dbReference>
<dbReference type="Gene3D" id="6.10.250.3130">
    <property type="match status" value="1"/>
</dbReference>
<dbReference type="Gene3D" id="1.10.287.10">
    <property type="entry name" value="S15/NS1, RNA-binding"/>
    <property type="match status" value="1"/>
</dbReference>
<dbReference type="HAMAP" id="MF_01343_B">
    <property type="entry name" value="Ribosomal_uS15_B"/>
    <property type="match status" value="1"/>
</dbReference>
<dbReference type="InterPro" id="IPR000589">
    <property type="entry name" value="Ribosomal_uS15"/>
</dbReference>
<dbReference type="InterPro" id="IPR005290">
    <property type="entry name" value="Ribosomal_uS15_bac-type"/>
</dbReference>
<dbReference type="InterPro" id="IPR009068">
    <property type="entry name" value="uS15_NS1_RNA-bd_sf"/>
</dbReference>
<dbReference type="NCBIfam" id="TIGR00952">
    <property type="entry name" value="S15_bact"/>
    <property type="match status" value="1"/>
</dbReference>
<dbReference type="PANTHER" id="PTHR23321">
    <property type="entry name" value="RIBOSOMAL PROTEIN S15, BACTERIAL AND ORGANELLAR"/>
    <property type="match status" value="1"/>
</dbReference>
<dbReference type="PANTHER" id="PTHR23321:SF26">
    <property type="entry name" value="SMALL RIBOSOMAL SUBUNIT PROTEIN US15M"/>
    <property type="match status" value="1"/>
</dbReference>
<dbReference type="Pfam" id="PF00312">
    <property type="entry name" value="Ribosomal_S15"/>
    <property type="match status" value="1"/>
</dbReference>
<dbReference type="SMART" id="SM01387">
    <property type="entry name" value="Ribosomal_S15"/>
    <property type="match status" value="1"/>
</dbReference>
<dbReference type="SUPFAM" id="SSF47060">
    <property type="entry name" value="S15/NS1 RNA-binding domain"/>
    <property type="match status" value="1"/>
</dbReference>
<dbReference type="PROSITE" id="PS00362">
    <property type="entry name" value="RIBOSOMAL_S15"/>
    <property type="match status" value="1"/>
</dbReference>